<reference key="1">
    <citation type="journal article" date="2006" name="BMC Genomics">
        <title>Complete genome sequence of Shigella flexneri 5b and comparison with Shigella flexneri 2a.</title>
        <authorList>
            <person name="Nie H."/>
            <person name="Yang F."/>
            <person name="Zhang X."/>
            <person name="Yang J."/>
            <person name="Chen L."/>
            <person name="Wang J."/>
            <person name="Xiong Z."/>
            <person name="Peng J."/>
            <person name="Sun L."/>
            <person name="Dong J."/>
            <person name="Xue Y."/>
            <person name="Xu X."/>
            <person name="Chen S."/>
            <person name="Yao Z."/>
            <person name="Shen Y."/>
            <person name="Jin Q."/>
        </authorList>
    </citation>
    <scope>NUCLEOTIDE SEQUENCE [LARGE SCALE GENOMIC DNA]</scope>
    <source>
        <strain>8401</strain>
    </source>
</reference>
<name>PURA_SHIF8</name>
<sequence length="432" mass="47315">MGNNVVVLGTQWGDEGKGKIVDLLTERAKYVVRYQGGHNAGHTLVINGEKTVLHLIPSGILRENVTSIIGNGVVLSPAALMKEMKELEDRGIPVRERLLLSEACPLILDYHVALDNAREKARGAKAIGTTGRGIGPAYEDKVARRGLRVGDLFDKETFAEKLKEVMEYHNFQLVNYYKAEAVDYQKVLDDTMAVADILTSMVVDVSDLLDQARQRGDFVMFEGAQGTLLDIDHGTYPYVTSSNTTAGGVATGSGLGPRYVDYVLGILKAYSTRVGAGPFPAELFDETGEFLCKQGNEFGATTGRRRRTGWLDTVAVRRAVQLNSLSGFCLTKLDVLDGLKEVKLCVAYRMPDGREVTTTPLAADDWKGVEPIYETMPGWSESTFGVKDRSGLPQAALNYIKRIEELTGVPIDIISTGPDRTETMILRDPFDA</sequence>
<keyword id="KW-0963">Cytoplasm</keyword>
<keyword id="KW-0342">GTP-binding</keyword>
<keyword id="KW-0436">Ligase</keyword>
<keyword id="KW-0460">Magnesium</keyword>
<keyword id="KW-0479">Metal-binding</keyword>
<keyword id="KW-0547">Nucleotide-binding</keyword>
<keyword id="KW-0658">Purine biosynthesis</keyword>
<comment type="function">
    <text evidence="1">Plays an important role in the de novo pathway of purine nucleotide biosynthesis. Catalyzes the first committed step in the biosynthesis of AMP from IMP.</text>
</comment>
<comment type="catalytic activity">
    <reaction evidence="1">
        <text>IMP + L-aspartate + GTP = N(6)-(1,2-dicarboxyethyl)-AMP + GDP + phosphate + 2 H(+)</text>
        <dbReference type="Rhea" id="RHEA:15753"/>
        <dbReference type="ChEBI" id="CHEBI:15378"/>
        <dbReference type="ChEBI" id="CHEBI:29991"/>
        <dbReference type="ChEBI" id="CHEBI:37565"/>
        <dbReference type="ChEBI" id="CHEBI:43474"/>
        <dbReference type="ChEBI" id="CHEBI:57567"/>
        <dbReference type="ChEBI" id="CHEBI:58053"/>
        <dbReference type="ChEBI" id="CHEBI:58189"/>
        <dbReference type="EC" id="6.3.4.4"/>
    </reaction>
</comment>
<comment type="cofactor">
    <cofactor evidence="1">
        <name>Mg(2+)</name>
        <dbReference type="ChEBI" id="CHEBI:18420"/>
    </cofactor>
    <text evidence="1">Binds 1 Mg(2+) ion per subunit.</text>
</comment>
<comment type="pathway">
    <text evidence="1">Purine metabolism; AMP biosynthesis via de novo pathway; AMP from IMP: step 1/2.</text>
</comment>
<comment type="subunit">
    <text evidence="1">Homodimer.</text>
</comment>
<comment type="subcellular location">
    <subcellularLocation>
        <location evidence="1">Cytoplasm</location>
    </subcellularLocation>
</comment>
<comment type="similarity">
    <text evidence="1">Belongs to the adenylosuccinate synthetase family.</text>
</comment>
<protein>
    <recommendedName>
        <fullName evidence="1">Adenylosuccinate synthetase</fullName>
        <shortName evidence="1">AMPSase</shortName>
        <shortName evidence="1">AdSS</shortName>
        <ecNumber evidence="1">6.3.4.4</ecNumber>
    </recommendedName>
    <alternativeName>
        <fullName evidence="1">IMP--aspartate ligase</fullName>
    </alternativeName>
</protein>
<proteinExistence type="inferred from homology"/>
<feature type="chain" id="PRO_1000000919" description="Adenylosuccinate synthetase">
    <location>
        <begin position="1"/>
        <end position="432"/>
    </location>
</feature>
<feature type="active site" description="Proton acceptor" evidence="1">
    <location>
        <position position="14"/>
    </location>
</feature>
<feature type="active site" description="Proton donor" evidence="1">
    <location>
        <position position="42"/>
    </location>
</feature>
<feature type="binding site" evidence="1">
    <location>
        <begin position="13"/>
        <end position="19"/>
    </location>
    <ligand>
        <name>GTP</name>
        <dbReference type="ChEBI" id="CHEBI:37565"/>
    </ligand>
</feature>
<feature type="binding site" description="in other chain" evidence="1">
    <location>
        <begin position="14"/>
        <end position="17"/>
    </location>
    <ligand>
        <name>IMP</name>
        <dbReference type="ChEBI" id="CHEBI:58053"/>
        <note>ligand shared between dimeric partners</note>
    </ligand>
</feature>
<feature type="binding site" evidence="1">
    <location>
        <position position="14"/>
    </location>
    <ligand>
        <name>Mg(2+)</name>
        <dbReference type="ChEBI" id="CHEBI:18420"/>
    </ligand>
</feature>
<feature type="binding site" description="in other chain" evidence="1">
    <location>
        <begin position="39"/>
        <end position="42"/>
    </location>
    <ligand>
        <name>IMP</name>
        <dbReference type="ChEBI" id="CHEBI:58053"/>
        <note>ligand shared between dimeric partners</note>
    </ligand>
</feature>
<feature type="binding site" evidence="1">
    <location>
        <begin position="41"/>
        <end position="43"/>
    </location>
    <ligand>
        <name>GTP</name>
        <dbReference type="ChEBI" id="CHEBI:37565"/>
    </ligand>
</feature>
<feature type="binding site" evidence="1">
    <location>
        <position position="41"/>
    </location>
    <ligand>
        <name>Mg(2+)</name>
        <dbReference type="ChEBI" id="CHEBI:18420"/>
    </ligand>
</feature>
<feature type="binding site" description="in other chain" evidence="1">
    <location>
        <position position="130"/>
    </location>
    <ligand>
        <name>IMP</name>
        <dbReference type="ChEBI" id="CHEBI:58053"/>
        <note>ligand shared between dimeric partners</note>
    </ligand>
</feature>
<feature type="binding site" evidence="1">
    <location>
        <position position="144"/>
    </location>
    <ligand>
        <name>IMP</name>
        <dbReference type="ChEBI" id="CHEBI:58053"/>
        <note>ligand shared between dimeric partners</note>
    </ligand>
</feature>
<feature type="binding site" description="in other chain" evidence="1">
    <location>
        <position position="225"/>
    </location>
    <ligand>
        <name>IMP</name>
        <dbReference type="ChEBI" id="CHEBI:58053"/>
        <note>ligand shared between dimeric partners</note>
    </ligand>
</feature>
<feature type="binding site" description="in other chain" evidence="1">
    <location>
        <position position="240"/>
    </location>
    <ligand>
        <name>IMP</name>
        <dbReference type="ChEBI" id="CHEBI:58053"/>
        <note>ligand shared between dimeric partners</note>
    </ligand>
</feature>
<feature type="binding site" evidence="1">
    <location>
        <begin position="300"/>
        <end position="306"/>
    </location>
    <ligand>
        <name>substrate</name>
    </ligand>
</feature>
<feature type="binding site" description="in other chain" evidence="1">
    <location>
        <position position="304"/>
    </location>
    <ligand>
        <name>IMP</name>
        <dbReference type="ChEBI" id="CHEBI:58053"/>
        <note>ligand shared between dimeric partners</note>
    </ligand>
</feature>
<feature type="binding site" evidence="1">
    <location>
        <position position="306"/>
    </location>
    <ligand>
        <name>GTP</name>
        <dbReference type="ChEBI" id="CHEBI:37565"/>
    </ligand>
</feature>
<feature type="binding site" evidence="1">
    <location>
        <begin position="332"/>
        <end position="334"/>
    </location>
    <ligand>
        <name>GTP</name>
        <dbReference type="ChEBI" id="CHEBI:37565"/>
    </ligand>
</feature>
<feature type="binding site" evidence="1">
    <location>
        <begin position="415"/>
        <end position="417"/>
    </location>
    <ligand>
        <name>GTP</name>
        <dbReference type="ChEBI" id="CHEBI:37565"/>
    </ligand>
</feature>
<dbReference type="EC" id="6.3.4.4" evidence="1"/>
<dbReference type="EMBL" id="CP000266">
    <property type="protein sequence ID" value="ABF06310.1"/>
    <property type="molecule type" value="Genomic_DNA"/>
</dbReference>
<dbReference type="RefSeq" id="WP_000527949.1">
    <property type="nucleotide sequence ID" value="NC_008258.1"/>
</dbReference>
<dbReference type="SMR" id="Q0SXA5"/>
<dbReference type="KEGG" id="sfv:SFV_4335"/>
<dbReference type="HOGENOM" id="CLU_029848_0_0_6"/>
<dbReference type="UniPathway" id="UPA00075">
    <property type="reaction ID" value="UER00335"/>
</dbReference>
<dbReference type="Proteomes" id="UP000000659">
    <property type="component" value="Chromosome"/>
</dbReference>
<dbReference type="GO" id="GO:0005737">
    <property type="term" value="C:cytoplasm"/>
    <property type="evidence" value="ECO:0007669"/>
    <property type="project" value="UniProtKB-SubCell"/>
</dbReference>
<dbReference type="GO" id="GO:0004019">
    <property type="term" value="F:adenylosuccinate synthase activity"/>
    <property type="evidence" value="ECO:0007669"/>
    <property type="project" value="UniProtKB-UniRule"/>
</dbReference>
<dbReference type="GO" id="GO:0005525">
    <property type="term" value="F:GTP binding"/>
    <property type="evidence" value="ECO:0007669"/>
    <property type="project" value="UniProtKB-UniRule"/>
</dbReference>
<dbReference type="GO" id="GO:0000287">
    <property type="term" value="F:magnesium ion binding"/>
    <property type="evidence" value="ECO:0007669"/>
    <property type="project" value="UniProtKB-UniRule"/>
</dbReference>
<dbReference type="GO" id="GO:0044208">
    <property type="term" value="P:'de novo' AMP biosynthetic process"/>
    <property type="evidence" value="ECO:0007669"/>
    <property type="project" value="UniProtKB-UniRule"/>
</dbReference>
<dbReference type="GO" id="GO:0046040">
    <property type="term" value="P:IMP metabolic process"/>
    <property type="evidence" value="ECO:0007669"/>
    <property type="project" value="TreeGrafter"/>
</dbReference>
<dbReference type="CDD" id="cd03108">
    <property type="entry name" value="AdSS"/>
    <property type="match status" value="1"/>
</dbReference>
<dbReference type="FunFam" id="1.10.300.10:FF:000001">
    <property type="entry name" value="Adenylosuccinate synthetase"/>
    <property type="match status" value="1"/>
</dbReference>
<dbReference type="FunFam" id="3.90.170.10:FF:000001">
    <property type="entry name" value="Adenylosuccinate synthetase"/>
    <property type="match status" value="1"/>
</dbReference>
<dbReference type="Gene3D" id="3.40.440.10">
    <property type="entry name" value="Adenylosuccinate Synthetase, subunit A, domain 1"/>
    <property type="match status" value="1"/>
</dbReference>
<dbReference type="Gene3D" id="1.10.300.10">
    <property type="entry name" value="Adenylosuccinate Synthetase, subunit A, domain 2"/>
    <property type="match status" value="1"/>
</dbReference>
<dbReference type="Gene3D" id="3.90.170.10">
    <property type="entry name" value="Adenylosuccinate Synthetase, subunit A, domain 3"/>
    <property type="match status" value="1"/>
</dbReference>
<dbReference type="HAMAP" id="MF_00011">
    <property type="entry name" value="Adenylosucc_synth"/>
    <property type="match status" value="1"/>
</dbReference>
<dbReference type="InterPro" id="IPR018220">
    <property type="entry name" value="Adenylosuccin_syn_GTP-bd"/>
</dbReference>
<dbReference type="InterPro" id="IPR033128">
    <property type="entry name" value="Adenylosuccin_syn_Lys_AS"/>
</dbReference>
<dbReference type="InterPro" id="IPR042109">
    <property type="entry name" value="Adenylosuccinate_synth_dom1"/>
</dbReference>
<dbReference type="InterPro" id="IPR042110">
    <property type="entry name" value="Adenylosuccinate_synth_dom2"/>
</dbReference>
<dbReference type="InterPro" id="IPR042111">
    <property type="entry name" value="Adenylosuccinate_synth_dom3"/>
</dbReference>
<dbReference type="InterPro" id="IPR001114">
    <property type="entry name" value="Adenylosuccinate_synthetase"/>
</dbReference>
<dbReference type="InterPro" id="IPR027417">
    <property type="entry name" value="P-loop_NTPase"/>
</dbReference>
<dbReference type="NCBIfam" id="NF002223">
    <property type="entry name" value="PRK01117.1"/>
    <property type="match status" value="1"/>
</dbReference>
<dbReference type="NCBIfam" id="TIGR00184">
    <property type="entry name" value="purA"/>
    <property type="match status" value="1"/>
</dbReference>
<dbReference type="PANTHER" id="PTHR11846">
    <property type="entry name" value="ADENYLOSUCCINATE SYNTHETASE"/>
    <property type="match status" value="1"/>
</dbReference>
<dbReference type="PANTHER" id="PTHR11846:SF0">
    <property type="entry name" value="ADENYLOSUCCINATE SYNTHETASE"/>
    <property type="match status" value="1"/>
</dbReference>
<dbReference type="Pfam" id="PF00709">
    <property type="entry name" value="Adenylsucc_synt"/>
    <property type="match status" value="1"/>
</dbReference>
<dbReference type="SMART" id="SM00788">
    <property type="entry name" value="Adenylsucc_synt"/>
    <property type="match status" value="1"/>
</dbReference>
<dbReference type="SUPFAM" id="SSF52540">
    <property type="entry name" value="P-loop containing nucleoside triphosphate hydrolases"/>
    <property type="match status" value="1"/>
</dbReference>
<dbReference type="PROSITE" id="PS01266">
    <property type="entry name" value="ADENYLOSUCCIN_SYN_1"/>
    <property type="match status" value="1"/>
</dbReference>
<dbReference type="PROSITE" id="PS00513">
    <property type="entry name" value="ADENYLOSUCCIN_SYN_2"/>
    <property type="match status" value="1"/>
</dbReference>
<organism>
    <name type="scientific">Shigella flexneri serotype 5b (strain 8401)</name>
    <dbReference type="NCBI Taxonomy" id="373384"/>
    <lineage>
        <taxon>Bacteria</taxon>
        <taxon>Pseudomonadati</taxon>
        <taxon>Pseudomonadota</taxon>
        <taxon>Gammaproteobacteria</taxon>
        <taxon>Enterobacterales</taxon>
        <taxon>Enterobacteriaceae</taxon>
        <taxon>Shigella</taxon>
    </lineage>
</organism>
<gene>
    <name evidence="1" type="primary">purA</name>
    <name type="ordered locus">SFV_4335</name>
</gene>
<evidence type="ECO:0000255" key="1">
    <source>
        <dbReference type="HAMAP-Rule" id="MF_00011"/>
    </source>
</evidence>
<accession>Q0SXA5</accession>